<feature type="peptide" id="PRO_0000451479" description="Contryphan Co838/Co854" evidence="5">
    <location>
        <begin position="1"/>
        <end position="6"/>
    </location>
</feature>
<feature type="modified residue" description="4-hydroxyproline; partial" evidence="5">
    <location>
        <position position="4"/>
    </location>
</feature>
<feature type="modified residue" description="Cysteine amide" evidence="5">
    <location>
        <position position="6"/>
    </location>
</feature>
<feature type="disulfide bond" evidence="5">
    <location>
        <begin position="1"/>
        <end position="6"/>
    </location>
</feature>
<protein>
    <recommendedName>
        <fullName evidence="6">Contryphan Co838/Co854</fullName>
    </recommendedName>
</protein>
<name>COW_CONCS</name>
<keyword id="KW-0027">Amidation</keyword>
<keyword id="KW-0903">Direct protein sequencing</keyword>
<keyword id="KW-1015">Disulfide bond</keyword>
<keyword id="KW-0379">Hydroxylation</keyword>
<keyword id="KW-0872">Ion channel impairing toxin</keyword>
<keyword id="KW-0964">Secreted</keyword>
<keyword id="KW-0800">Toxin</keyword>
<organism>
    <name type="scientific">Conus coronatus</name>
    <name type="common">Crowned cone</name>
    <dbReference type="NCBI Taxonomy" id="89441"/>
    <lineage>
        <taxon>Eukaryota</taxon>
        <taxon>Metazoa</taxon>
        <taxon>Spiralia</taxon>
        <taxon>Lophotrochozoa</taxon>
        <taxon>Mollusca</taxon>
        <taxon>Gastropoda</taxon>
        <taxon>Caenogastropoda</taxon>
        <taxon>Neogastropoda</taxon>
        <taxon>Conoidea</taxon>
        <taxon>Conidae</taxon>
        <taxon>Conus</taxon>
        <taxon>Virroconus</taxon>
    </lineage>
</organism>
<reference key="1">
    <citation type="journal article" date="2017" name="Toxicon">
        <title>Identification of short single disulfide-containing contryphans from the venom of cone snails using de novo mass spectrometry-based sequencing methods.</title>
        <authorList>
            <person name="Franklin J.B."/>
            <person name="Rajesh R.P."/>
            <person name="Vinithkumar N.V."/>
            <person name="Kirubagaran R."/>
        </authorList>
    </citation>
    <scope>PROTEIN SEQUENCE</scope>
    <scope>SUBCELLULAR LOCATION</scope>
    <scope>MASS SPECTROMETRY</scope>
    <scope>HYDROXYLATION AT PRO-4</scope>
    <scope>AMIDATION AT CYS-6</scope>
    <scope>DISULFIDE BOND</scope>
    <source>
        <tissue>Venom</tissue>
    </source>
</reference>
<comment type="function">
    <text evidence="1 2 3 4">Its target is unknown, but this toxin may modulate voltage-activated calcium channels (Cav) or calcium-dependent potassium channels (KCa).</text>
</comment>
<comment type="subcellular location">
    <subcellularLocation>
        <location evidence="5">Secreted</location>
    </subcellularLocation>
</comment>
<comment type="tissue specificity">
    <text evidence="8">Expressed by the venom duct.</text>
</comment>
<comment type="domain">
    <text evidence="7">The cysteine framework is C-C.</text>
</comment>
<comment type="mass spectrometry" mass="854.0" method="Electrospray" evidence="5">
    <text>Average mass, Co854 (with hydroxyPro-4).</text>
</comment>
<comment type="mass spectrometry" mass="838.0" method="Electrospray" evidence="5">
    <text>Average mass, Co838.</text>
</comment>
<comment type="similarity">
    <text evidence="7">Belongs to the O2 superfamily. Contryphan family.</text>
</comment>
<evidence type="ECO:0000250" key="1">
    <source>
        <dbReference type="UniProtKB" id="P0C248"/>
    </source>
</evidence>
<evidence type="ECO:0000250" key="2">
    <source>
        <dbReference type="UniProtKB" id="P0C250"/>
    </source>
</evidence>
<evidence type="ECO:0000250" key="3">
    <source>
        <dbReference type="UniProtKB" id="P62903"/>
    </source>
</evidence>
<evidence type="ECO:0000250" key="4">
    <source>
        <dbReference type="UniProtKB" id="P83047"/>
    </source>
</evidence>
<evidence type="ECO:0000269" key="5">
    <source>
    </source>
</evidence>
<evidence type="ECO:0000303" key="6">
    <source>
    </source>
</evidence>
<evidence type="ECO:0000305" key="7"/>
<evidence type="ECO:0000305" key="8">
    <source>
    </source>
</evidence>
<sequence length="6" mass="841">CWFPWC</sequence>
<proteinExistence type="evidence at protein level"/>
<accession>P0DUC5</accession>
<dbReference type="GO" id="GO:0005576">
    <property type="term" value="C:extracellular region"/>
    <property type="evidence" value="ECO:0007669"/>
    <property type="project" value="UniProtKB-SubCell"/>
</dbReference>
<dbReference type="GO" id="GO:0099106">
    <property type="term" value="F:ion channel regulator activity"/>
    <property type="evidence" value="ECO:0007669"/>
    <property type="project" value="UniProtKB-KW"/>
</dbReference>
<dbReference type="GO" id="GO:0090729">
    <property type="term" value="F:toxin activity"/>
    <property type="evidence" value="ECO:0007669"/>
    <property type="project" value="UniProtKB-KW"/>
</dbReference>